<proteinExistence type="evidence at protein level"/>
<accession>P0C837</accession>
<reference key="1">
    <citation type="journal article" date="2006" name="Biochimie">
        <title>Analysis of expressed sequence tags from the venom ducts of Conus striatus: focusing on the expression profile of conotoxins.</title>
        <authorList>
            <person name="Pi C."/>
            <person name="Liu Y."/>
            <person name="Peng C."/>
            <person name="Jiang X."/>
            <person name="Liu J."/>
            <person name="Xu B."/>
            <person name="Yu X."/>
            <person name="Yu Y."/>
            <person name="Jiang X."/>
            <person name="Wang L."/>
            <person name="Dong M."/>
            <person name="Chen S."/>
            <person name="Xu A.-L."/>
        </authorList>
    </citation>
    <scope>NUCLEOTIDE SEQUENCE [MRNA]</scope>
    <source>
        <tissue>Venom duct</tissue>
    </source>
</reference>
<reference key="2">
    <citation type="journal article" date="2007" name="Rapid Commun. Mass Spectrom.">
        <title>Rapid mass spectral identification of contryphans. Detection of characteristic peptide ions by fragmentation of intact disulfide-bonded peptides in crude venom.</title>
        <authorList>
            <person name="Thakur S.S."/>
            <person name="Balaram P."/>
        </authorList>
    </citation>
    <scope>PROTEIN SEQUENCE OF 55-62 AND 56-62</scope>
    <scope>IDENTIFICATION BY MASS SPECTROMETRY</scope>
    <scope>MASS SPECTROMETRY</scope>
    <scope>SUBCELLULAR LOCATION</scope>
    <scope>HYDROXYLATION AT PRO-57</scope>
    <scope>D-AMINO ACID AT TRP-58</scope>
    <scope>AMIDATION AT CYS-62</scope>
    <source>
        <tissue>Venom</tissue>
    </source>
</reference>
<sequence>MEKLTILVLVAAVLLSTQVMVQGDADQPADRDAVPRDDNAGGTDGKFMNVQRRSGCPWEPWCG</sequence>
<dbReference type="SMR" id="P0C837"/>
<dbReference type="ConoServer" id="3551">
    <property type="toxin name" value="Bromocontryphan-S"/>
</dbReference>
<dbReference type="ConoServer" id="3548">
    <property type="toxin name" value="Contryphan-S precursor"/>
</dbReference>
<dbReference type="GO" id="GO:0005576">
    <property type="term" value="C:extracellular region"/>
    <property type="evidence" value="ECO:0007669"/>
    <property type="project" value="UniProtKB-SubCell"/>
</dbReference>
<dbReference type="GO" id="GO:0008200">
    <property type="term" value="F:ion channel inhibitor activity"/>
    <property type="evidence" value="ECO:0007669"/>
    <property type="project" value="InterPro"/>
</dbReference>
<dbReference type="GO" id="GO:0090729">
    <property type="term" value="F:toxin activity"/>
    <property type="evidence" value="ECO:0007669"/>
    <property type="project" value="UniProtKB-KW"/>
</dbReference>
<dbReference type="InterPro" id="IPR004214">
    <property type="entry name" value="Conotoxin"/>
</dbReference>
<dbReference type="InterPro" id="IPR011062">
    <property type="entry name" value="Contryphan_CS"/>
</dbReference>
<dbReference type="Pfam" id="PF02950">
    <property type="entry name" value="Conotoxin"/>
    <property type="match status" value="1"/>
</dbReference>
<dbReference type="PROSITE" id="PS60027">
    <property type="entry name" value="CONTRYPHAN"/>
    <property type="match status" value="1"/>
</dbReference>
<protein>
    <recommendedName>
        <fullName evidence="9">Contryphan-S</fullName>
    </recommendedName>
    <alternativeName>
        <fullName evidence="10">St990</fullName>
    </alternativeName>
    <component>
        <recommendedName>
            <fullName evidence="10">Contryphan-S St933</fullName>
        </recommendedName>
    </component>
</protein>
<comment type="function">
    <text evidence="1 2 4 5">Its target is unknown, but this toxin may modulate voltage-activated calcium channels (Cav) or calcium-dependent potassium channels (KCa).</text>
</comment>
<comment type="subcellular location">
    <subcellularLocation>
        <location evidence="8">Secreted</location>
    </subcellularLocation>
</comment>
<comment type="tissue specificity">
    <text evidence="12">Expressed by the venom duct.</text>
</comment>
<comment type="domain">
    <text evidence="11">The cysteine framework is C-C.</text>
</comment>
<comment type="mass spectrometry">
    <molecule>Contryphan-S</molecule>
</comment>
<comment type="mass spectrometry">
    <molecule>Contryphan-S St933</molecule>
</comment>
<comment type="miscellaneous">
    <text evidence="3">Exists in two forms, due to cis-trans isomerization at 56-Cys-hydroxyPro-57. The cis conformation is the major form.</text>
</comment>
<comment type="similarity">
    <text evidence="11">Belongs to the O2 superfamily. Contryphan family.</text>
</comment>
<organism>
    <name type="scientific">Conus striatus</name>
    <name type="common">Striated cone</name>
    <dbReference type="NCBI Taxonomy" id="6493"/>
    <lineage>
        <taxon>Eukaryota</taxon>
        <taxon>Metazoa</taxon>
        <taxon>Spiralia</taxon>
        <taxon>Lophotrochozoa</taxon>
        <taxon>Mollusca</taxon>
        <taxon>Gastropoda</taxon>
        <taxon>Caenogastropoda</taxon>
        <taxon>Neogastropoda</taxon>
        <taxon>Conoidea</taxon>
        <taxon>Conidae</taxon>
        <taxon>Conus</taxon>
        <taxon>Pionoconus</taxon>
    </lineage>
</organism>
<evidence type="ECO:0000250" key="1">
    <source>
        <dbReference type="UniProtKB" id="P0C248"/>
    </source>
</evidence>
<evidence type="ECO:0000250" key="2">
    <source>
        <dbReference type="UniProtKB" id="P0C250"/>
    </source>
</evidence>
<evidence type="ECO:0000250" key="3">
    <source>
        <dbReference type="UniProtKB" id="P58787"/>
    </source>
</evidence>
<evidence type="ECO:0000250" key="4">
    <source>
        <dbReference type="UniProtKB" id="P62903"/>
    </source>
</evidence>
<evidence type="ECO:0000250" key="5">
    <source>
        <dbReference type="UniProtKB" id="P83047"/>
    </source>
</evidence>
<evidence type="ECO:0000255" key="6"/>
<evidence type="ECO:0000256" key="7">
    <source>
        <dbReference type="SAM" id="MobiDB-lite"/>
    </source>
</evidence>
<evidence type="ECO:0000269" key="8">
    <source>
    </source>
</evidence>
<evidence type="ECO:0000303" key="9">
    <source>
    </source>
</evidence>
<evidence type="ECO:0000303" key="10">
    <source>
    </source>
</evidence>
<evidence type="ECO:0000305" key="11"/>
<evidence type="ECO:0000305" key="12">
    <source>
    </source>
</evidence>
<keyword id="KW-0027">Amidation</keyword>
<keyword id="KW-0208">D-amino acid</keyword>
<keyword id="KW-0903">Direct protein sequencing</keyword>
<keyword id="KW-1015">Disulfide bond</keyword>
<keyword id="KW-0379">Hydroxylation</keyword>
<keyword id="KW-0872">Ion channel impairing toxin</keyword>
<keyword id="KW-0528">Neurotoxin</keyword>
<keyword id="KW-0964">Secreted</keyword>
<keyword id="KW-0732">Signal</keyword>
<keyword id="KW-0800">Toxin</keyword>
<name>COW_CONST</name>
<feature type="signal peptide" evidence="6">
    <location>
        <begin position="1"/>
        <end position="23"/>
    </location>
</feature>
<feature type="propeptide" id="PRO_0000345106" evidence="11">
    <location>
        <begin position="24"/>
        <end position="54"/>
    </location>
</feature>
<feature type="peptide" id="PRO_0000345107" description="Contryphan-S" evidence="8">
    <location>
        <begin position="55"/>
        <end position="62"/>
    </location>
</feature>
<feature type="peptide" id="PRO_0000439695" description="Contryphan-S St933" evidence="8">
    <location>
        <begin position="56"/>
        <end position="62"/>
    </location>
</feature>
<feature type="region of interest" description="Disordered" evidence="7">
    <location>
        <begin position="23"/>
        <end position="49"/>
    </location>
</feature>
<feature type="compositionally biased region" description="Basic and acidic residues" evidence="7">
    <location>
        <begin position="28"/>
        <end position="39"/>
    </location>
</feature>
<feature type="modified residue" description="4-hydroxyproline" evidence="8">
    <location>
        <position position="57"/>
    </location>
</feature>
<feature type="modified residue" description="D-tryptophan" evidence="8">
    <location>
        <position position="58"/>
    </location>
</feature>
<feature type="modified residue" description="Cysteine amide" evidence="8">
    <location>
        <position position="62"/>
    </location>
</feature>
<feature type="disulfide bond" evidence="12">
    <location>
        <begin position="56"/>
        <end position="62"/>
    </location>
</feature>